<name>DNLJ_MESFL</name>
<dbReference type="EC" id="6.5.1.2" evidence="1"/>
<dbReference type="EMBL" id="AE017263">
    <property type="protein sequence ID" value="AAT75516.1"/>
    <property type="molecule type" value="Genomic_DNA"/>
</dbReference>
<dbReference type="RefSeq" id="WP_011183057.1">
    <property type="nucleotide sequence ID" value="NC_006055.1"/>
</dbReference>
<dbReference type="RefSeq" id="YP_053400.1">
    <property type="nucleotide sequence ID" value="NC_006055.1"/>
</dbReference>
<dbReference type="SMR" id="Q6F1V7"/>
<dbReference type="STRING" id="265311.Mfl160"/>
<dbReference type="PaxDb" id="265311-Mfl160"/>
<dbReference type="EnsemblBacteria" id="AAT75516">
    <property type="protein sequence ID" value="AAT75516"/>
    <property type="gene ID" value="Mfl160"/>
</dbReference>
<dbReference type="GeneID" id="2898189"/>
<dbReference type="KEGG" id="mfl:Mfl160"/>
<dbReference type="PATRIC" id="fig|265311.5.peg.161"/>
<dbReference type="eggNOG" id="COG0272">
    <property type="taxonomic scope" value="Bacteria"/>
</dbReference>
<dbReference type="HOGENOM" id="CLU_007764_2_1_14"/>
<dbReference type="OrthoDB" id="9759736at2"/>
<dbReference type="Proteomes" id="UP000006647">
    <property type="component" value="Chromosome"/>
</dbReference>
<dbReference type="GO" id="GO:0005829">
    <property type="term" value="C:cytosol"/>
    <property type="evidence" value="ECO:0007669"/>
    <property type="project" value="TreeGrafter"/>
</dbReference>
<dbReference type="GO" id="GO:0003911">
    <property type="term" value="F:DNA ligase (NAD+) activity"/>
    <property type="evidence" value="ECO:0007669"/>
    <property type="project" value="UniProtKB-UniRule"/>
</dbReference>
<dbReference type="GO" id="GO:0046872">
    <property type="term" value="F:metal ion binding"/>
    <property type="evidence" value="ECO:0007669"/>
    <property type="project" value="UniProtKB-KW"/>
</dbReference>
<dbReference type="GO" id="GO:0006281">
    <property type="term" value="P:DNA repair"/>
    <property type="evidence" value="ECO:0007669"/>
    <property type="project" value="UniProtKB-KW"/>
</dbReference>
<dbReference type="GO" id="GO:0006260">
    <property type="term" value="P:DNA replication"/>
    <property type="evidence" value="ECO:0007669"/>
    <property type="project" value="UniProtKB-KW"/>
</dbReference>
<dbReference type="CDD" id="cd17748">
    <property type="entry name" value="BRCT_DNA_ligase_like"/>
    <property type="match status" value="1"/>
</dbReference>
<dbReference type="CDD" id="cd00114">
    <property type="entry name" value="LIGANc"/>
    <property type="match status" value="1"/>
</dbReference>
<dbReference type="FunFam" id="1.10.150.20:FF:000006">
    <property type="entry name" value="DNA ligase"/>
    <property type="match status" value="1"/>
</dbReference>
<dbReference type="FunFam" id="1.10.150.20:FF:000007">
    <property type="entry name" value="DNA ligase"/>
    <property type="match status" value="1"/>
</dbReference>
<dbReference type="FunFam" id="3.30.470.30:FF:000001">
    <property type="entry name" value="DNA ligase"/>
    <property type="match status" value="1"/>
</dbReference>
<dbReference type="Gene3D" id="1.10.150.20">
    <property type="entry name" value="5' to 3' exonuclease, C-terminal subdomain"/>
    <property type="match status" value="2"/>
</dbReference>
<dbReference type="Gene3D" id="3.40.50.10190">
    <property type="entry name" value="BRCT domain"/>
    <property type="match status" value="1"/>
</dbReference>
<dbReference type="Gene3D" id="3.30.470.30">
    <property type="entry name" value="DNA ligase/mRNA capping enzyme"/>
    <property type="match status" value="1"/>
</dbReference>
<dbReference type="Gene3D" id="1.10.287.610">
    <property type="entry name" value="Helix hairpin bin"/>
    <property type="match status" value="1"/>
</dbReference>
<dbReference type="Gene3D" id="2.40.50.140">
    <property type="entry name" value="Nucleic acid-binding proteins"/>
    <property type="match status" value="1"/>
</dbReference>
<dbReference type="HAMAP" id="MF_01588">
    <property type="entry name" value="DNA_ligase_A"/>
    <property type="match status" value="1"/>
</dbReference>
<dbReference type="InterPro" id="IPR001357">
    <property type="entry name" value="BRCT_dom"/>
</dbReference>
<dbReference type="InterPro" id="IPR036420">
    <property type="entry name" value="BRCT_dom_sf"/>
</dbReference>
<dbReference type="InterPro" id="IPR041663">
    <property type="entry name" value="DisA/LigA_HHH"/>
</dbReference>
<dbReference type="InterPro" id="IPR001679">
    <property type="entry name" value="DNA_ligase"/>
</dbReference>
<dbReference type="InterPro" id="IPR018239">
    <property type="entry name" value="DNA_ligase_AS"/>
</dbReference>
<dbReference type="InterPro" id="IPR013839">
    <property type="entry name" value="DNAligase_adenylation"/>
</dbReference>
<dbReference type="InterPro" id="IPR013840">
    <property type="entry name" value="DNAligase_N"/>
</dbReference>
<dbReference type="InterPro" id="IPR012340">
    <property type="entry name" value="NA-bd_OB-fold"/>
</dbReference>
<dbReference type="InterPro" id="IPR004150">
    <property type="entry name" value="NAD_DNA_ligase_OB"/>
</dbReference>
<dbReference type="InterPro" id="IPR010994">
    <property type="entry name" value="RuvA_2-like"/>
</dbReference>
<dbReference type="InterPro" id="IPR004149">
    <property type="entry name" value="Znf_DNAligase_C4"/>
</dbReference>
<dbReference type="NCBIfam" id="TIGR00575">
    <property type="entry name" value="dnlj"/>
    <property type="match status" value="1"/>
</dbReference>
<dbReference type="NCBIfam" id="NF005932">
    <property type="entry name" value="PRK07956.1"/>
    <property type="match status" value="1"/>
</dbReference>
<dbReference type="PANTHER" id="PTHR23389">
    <property type="entry name" value="CHROMOSOME TRANSMISSION FIDELITY FACTOR 18"/>
    <property type="match status" value="1"/>
</dbReference>
<dbReference type="PANTHER" id="PTHR23389:SF9">
    <property type="entry name" value="DNA LIGASE"/>
    <property type="match status" value="1"/>
</dbReference>
<dbReference type="Pfam" id="PF00533">
    <property type="entry name" value="BRCT"/>
    <property type="match status" value="1"/>
</dbReference>
<dbReference type="Pfam" id="PF01653">
    <property type="entry name" value="DNA_ligase_aden"/>
    <property type="match status" value="1"/>
</dbReference>
<dbReference type="Pfam" id="PF03120">
    <property type="entry name" value="DNA_ligase_OB"/>
    <property type="match status" value="1"/>
</dbReference>
<dbReference type="Pfam" id="PF03119">
    <property type="entry name" value="DNA_ligase_ZBD"/>
    <property type="match status" value="1"/>
</dbReference>
<dbReference type="Pfam" id="PF12826">
    <property type="entry name" value="HHH_2"/>
    <property type="match status" value="1"/>
</dbReference>
<dbReference type="Pfam" id="PF22745">
    <property type="entry name" value="Nlig-Ia"/>
    <property type="match status" value="1"/>
</dbReference>
<dbReference type="PIRSF" id="PIRSF001604">
    <property type="entry name" value="LigA"/>
    <property type="match status" value="1"/>
</dbReference>
<dbReference type="SMART" id="SM00292">
    <property type="entry name" value="BRCT"/>
    <property type="match status" value="1"/>
</dbReference>
<dbReference type="SMART" id="SM00532">
    <property type="entry name" value="LIGANc"/>
    <property type="match status" value="1"/>
</dbReference>
<dbReference type="SUPFAM" id="SSF52113">
    <property type="entry name" value="BRCT domain"/>
    <property type="match status" value="1"/>
</dbReference>
<dbReference type="SUPFAM" id="SSF56091">
    <property type="entry name" value="DNA ligase/mRNA capping enzyme, catalytic domain"/>
    <property type="match status" value="1"/>
</dbReference>
<dbReference type="SUPFAM" id="SSF50249">
    <property type="entry name" value="Nucleic acid-binding proteins"/>
    <property type="match status" value="1"/>
</dbReference>
<dbReference type="SUPFAM" id="SSF47781">
    <property type="entry name" value="RuvA domain 2-like"/>
    <property type="match status" value="1"/>
</dbReference>
<dbReference type="PROSITE" id="PS50172">
    <property type="entry name" value="BRCT"/>
    <property type="match status" value="1"/>
</dbReference>
<dbReference type="PROSITE" id="PS01055">
    <property type="entry name" value="DNA_LIGASE_N1"/>
    <property type="match status" value="1"/>
</dbReference>
<feature type="chain" id="PRO_0000313304" description="DNA ligase">
    <location>
        <begin position="1"/>
        <end position="666"/>
    </location>
</feature>
<feature type="domain" description="BRCT" evidence="1">
    <location>
        <begin position="588"/>
        <end position="666"/>
    </location>
</feature>
<feature type="active site" description="N6-AMP-lysine intermediate" evidence="1">
    <location>
        <position position="116"/>
    </location>
</feature>
<feature type="binding site" evidence="1">
    <location>
        <begin position="34"/>
        <end position="38"/>
    </location>
    <ligand>
        <name>NAD(+)</name>
        <dbReference type="ChEBI" id="CHEBI:57540"/>
    </ligand>
</feature>
<feature type="binding site" evidence="1">
    <location>
        <begin position="83"/>
        <end position="84"/>
    </location>
    <ligand>
        <name>NAD(+)</name>
        <dbReference type="ChEBI" id="CHEBI:57540"/>
    </ligand>
</feature>
<feature type="binding site" evidence="1">
    <location>
        <position position="114"/>
    </location>
    <ligand>
        <name>NAD(+)</name>
        <dbReference type="ChEBI" id="CHEBI:57540"/>
    </ligand>
</feature>
<feature type="binding site" evidence="1">
    <location>
        <position position="137"/>
    </location>
    <ligand>
        <name>NAD(+)</name>
        <dbReference type="ChEBI" id="CHEBI:57540"/>
    </ligand>
</feature>
<feature type="binding site" evidence="1">
    <location>
        <position position="171"/>
    </location>
    <ligand>
        <name>NAD(+)</name>
        <dbReference type="ChEBI" id="CHEBI:57540"/>
    </ligand>
</feature>
<feature type="binding site" evidence="1">
    <location>
        <position position="286"/>
    </location>
    <ligand>
        <name>NAD(+)</name>
        <dbReference type="ChEBI" id="CHEBI:57540"/>
    </ligand>
</feature>
<feature type="binding site" evidence="1">
    <location>
        <position position="310"/>
    </location>
    <ligand>
        <name>NAD(+)</name>
        <dbReference type="ChEBI" id="CHEBI:57540"/>
    </ligand>
</feature>
<feature type="binding site" evidence="1">
    <location>
        <position position="404"/>
    </location>
    <ligand>
        <name>Zn(2+)</name>
        <dbReference type="ChEBI" id="CHEBI:29105"/>
    </ligand>
</feature>
<feature type="binding site" evidence="1">
    <location>
        <position position="407"/>
    </location>
    <ligand>
        <name>Zn(2+)</name>
        <dbReference type="ChEBI" id="CHEBI:29105"/>
    </ligand>
</feature>
<feature type="binding site" evidence="1">
    <location>
        <position position="422"/>
    </location>
    <ligand>
        <name>Zn(2+)</name>
        <dbReference type="ChEBI" id="CHEBI:29105"/>
    </ligand>
</feature>
<feature type="binding site" evidence="1">
    <location>
        <position position="427"/>
    </location>
    <ligand>
        <name>Zn(2+)</name>
        <dbReference type="ChEBI" id="CHEBI:29105"/>
    </ligand>
</feature>
<protein>
    <recommendedName>
        <fullName evidence="1">DNA ligase</fullName>
        <ecNumber evidence="1">6.5.1.2</ecNumber>
    </recommendedName>
    <alternativeName>
        <fullName evidence="1">Polydeoxyribonucleotide synthase [NAD(+)]</fullName>
    </alternativeName>
</protein>
<sequence length="666" mass="75211">MTKEQASKLINDLRLKLNEWAKEYYVLDNPSVDDAEYDKTIHQLLDLENQFPELITSDSITQKVGGIVSDKFEKHTHKYPMLSLGDIFSWDEFINFNKQVAKVTGTENNEYTAELKIDGLSISLIYKDGVLQKGVTRGDGKVGENVTTNVKTIKSIPLSIPSKDEIEIRGEVFLGKKEFAKINEERLLNGDQLFANPRNAAAGTLRQLDSKIVAERNLDAYLYYYFNENNPINTQFDSINQIKNLGLKINKETKICKTLEEVKLYIEYYTEKRNELDYEIDGIVFKLNDKKLQEEVGYTAKTPKWAIAYKFPAEVKQTKLLDIFPTVGRTGKITYNAKLEPVQIAGTTVSAASLNNAEYIMAKDLRINSIVKVKKAGDIIPEVISAIKDEKFDLLPIWEKDVQCPACNELLEKTSTEVDQFCVNFNCPAQILRSLEHFASRGAANIVGLGGQTIKKLFEEKLITNIADIFKVEEHKENIINFEKFGEKSFENLIASIKESKNNSFEKTLFGLGIRHVGSKTALTLAQIYKNIDNLKNATYEELSSIDSVGEVLAMSIVDWFKIESNLQLINELKSFDVNFEYLGQAKNTESTISEKSFVITGTLSESRDYFKDIIELNNGKVIGSVSKKTDYVLAGENAGSKLTKAEELNVKVINEEEFFAILKGE</sequence>
<gene>
    <name evidence="1" type="primary">ligA</name>
    <name type="ordered locus">Mfl160</name>
</gene>
<organism>
    <name type="scientific">Mesoplasma florum (strain ATCC 33453 / NBRC 100688 / NCTC 11704 / L1)</name>
    <name type="common">Acholeplasma florum</name>
    <dbReference type="NCBI Taxonomy" id="265311"/>
    <lineage>
        <taxon>Bacteria</taxon>
        <taxon>Bacillati</taxon>
        <taxon>Mycoplasmatota</taxon>
        <taxon>Mollicutes</taxon>
        <taxon>Entomoplasmatales</taxon>
        <taxon>Entomoplasmataceae</taxon>
        <taxon>Mesoplasma</taxon>
    </lineage>
</organism>
<proteinExistence type="inferred from homology"/>
<keyword id="KW-0227">DNA damage</keyword>
<keyword id="KW-0234">DNA repair</keyword>
<keyword id="KW-0235">DNA replication</keyword>
<keyword id="KW-0436">Ligase</keyword>
<keyword id="KW-0460">Magnesium</keyword>
<keyword id="KW-0464">Manganese</keyword>
<keyword id="KW-0479">Metal-binding</keyword>
<keyword id="KW-0520">NAD</keyword>
<keyword id="KW-1185">Reference proteome</keyword>
<keyword id="KW-0862">Zinc</keyword>
<comment type="function">
    <text evidence="1">DNA ligase that catalyzes the formation of phosphodiester linkages between 5'-phosphoryl and 3'-hydroxyl groups in double-stranded DNA using NAD as a coenzyme and as the energy source for the reaction. It is essential for DNA replication and repair of damaged DNA.</text>
</comment>
<comment type="catalytic activity">
    <reaction evidence="1">
        <text>NAD(+) + (deoxyribonucleotide)n-3'-hydroxyl + 5'-phospho-(deoxyribonucleotide)m = (deoxyribonucleotide)n+m + AMP + beta-nicotinamide D-nucleotide.</text>
        <dbReference type="EC" id="6.5.1.2"/>
    </reaction>
</comment>
<comment type="cofactor">
    <cofactor evidence="1">
        <name>Mg(2+)</name>
        <dbReference type="ChEBI" id="CHEBI:18420"/>
    </cofactor>
    <cofactor evidence="1">
        <name>Mn(2+)</name>
        <dbReference type="ChEBI" id="CHEBI:29035"/>
    </cofactor>
</comment>
<comment type="similarity">
    <text evidence="1">Belongs to the NAD-dependent DNA ligase family. LigA subfamily.</text>
</comment>
<accession>Q6F1V7</accession>
<evidence type="ECO:0000255" key="1">
    <source>
        <dbReference type="HAMAP-Rule" id="MF_01588"/>
    </source>
</evidence>
<reference key="1">
    <citation type="submission" date="2004-06" db="EMBL/GenBank/DDBJ databases">
        <authorList>
            <person name="Birren B.W."/>
            <person name="Stange-Thomann N."/>
            <person name="Hafez N."/>
            <person name="DeCaprio D."/>
            <person name="Fisher S."/>
            <person name="Butler J."/>
            <person name="Elkins T."/>
            <person name="Kodira C.D."/>
            <person name="Major J."/>
            <person name="Wang S."/>
            <person name="Nicol R."/>
            <person name="Nusbaum C."/>
        </authorList>
    </citation>
    <scope>NUCLEOTIDE SEQUENCE [LARGE SCALE GENOMIC DNA]</scope>
    <source>
        <strain>ATCC 33453 / NBRC 100688 / NCTC 11704 / L1</strain>
    </source>
</reference>